<reference key="1">
    <citation type="journal article" date="1998" name="Genetics">
        <title>Sequence-tagged-site (STS) markers of arbitrary genes: development, characterization and analysis of linkage in black spruce.</title>
        <authorList>
            <person name="Perry D.J."/>
            <person name="Bousquet J."/>
        </authorList>
    </citation>
    <scope>NUCLEOTIDE SEQUENCE [MRNA]</scope>
</reference>
<gene>
    <name type="primary">RPL13A</name>
    <name type="synonym">SB16</name>
</gene>
<name>RL13A_PICMA</name>
<keyword id="KW-0687">Ribonucleoprotein</keyword>
<keyword id="KW-0689">Ribosomal protein</keyword>
<evidence type="ECO:0000305" key="1"/>
<dbReference type="EMBL" id="AF051212">
    <property type="protein sequence ID" value="AAC32117.1"/>
    <property type="molecule type" value="mRNA"/>
</dbReference>
<dbReference type="SMR" id="O65055"/>
<dbReference type="GO" id="GO:0022625">
    <property type="term" value="C:cytosolic large ribosomal subunit"/>
    <property type="evidence" value="ECO:0007669"/>
    <property type="project" value="TreeGrafter"/>
</dbReference>
<dbReference type="GO" id="GO:0003729">
    <property type="term" value="F:mRNA binding"/>
    <property type="evidence" value="ECO:0007669"/>
    <property type="project" value="TreeGrafter"/>
</dbReference>
<dbReference type="GO" id="GO:0003735">
    <property type="term" value="F:structural constituent of ribosome"/>
    <property type="evidence" value="ECO:0007669"/>
    <property type="project" value="InterPro"/>
</dbReference>
<dbReference type="GO" id="GO:0017148">
    <property type="term" value="P:negative regulation of translation"/>
    <property type="evidence" value="ECO:0007669"/>
    <property type="project" value="TreeGrafter"/>
</dbReference>
<dbReference type="GO" id="GO:0006412">
    <property type="term" value="P:translation"/>
    <property type="evidence" value="ECO:0007669"/>
    <property type="project" value="InterPro"/>
</dbReference>
<dbReference type="CDD" id="cd00392">
    <property type="entry name" value="Ribosomal_L13"/>
    <property type="match status" value="1"/>
</dbReference>
<dbReference type="FunFam" id="6.10.250.3250:FF:000001">
    <property type="entry name" value="60S ribosomal protein L13a"/>
    <property type="match status" value="1"/>
</dbReference>
<dbReference type="FunFam" id="3.90.1180.10:FF:000003">
    <property type="entry name" value="60S ribosomal protein L13a-4"/>
    <property type="match status" value="1"/>
</dbReference>
<dbReference type="Gene3D" id="6.10.250.3250">
    <property type="match status" value="1"/>
</dbReference>
<dbReference type="Gene3D" id="3.90.1180.10">
    <property type="entry name" value="Ribosomal protein L13"/>
    <property type="match status" value="1"/>
</dbReference>
<dbReference type="HAMAP" id="MF_01366">
    <property type="entry name" value="Ribosomal_uL13"/>
    <property type="match status" value="1"/>
</dbReference>
<dbReference type="InterPro" id="IPR005822">
    <property type="entry name" value="Ribosomal_uL13"/>
</dbReference>
<dbReference type="InterPro" id="IPR023563">
    <property type="entry name" value="Ribosomal_uL13_CS"/>
</dbReference>
<dbReference type="InterPro" id="IPR005755">
    <property type="entry name" value="Ribosomal_uL13_euk/arc"/>
</dbReference>
<dbReference type="InterPro" id="IPR036899">
    <property type="entry name" value="Ribosomal_uL13_sf"/>
</dbReference>
<dbReference type="NCBIfam" id="TIGR01077">
    <property type="entry name" value="L13_A_E"/>
    <property type="match status" value="1"/>
</dbReference>
<dbReference type="PANTHER" id="PTHR11545:SF3">
    <property type="entry name" value="LARGE RIBOSOMAL SUBUNIT PROTEIN UL13"/>
    <property type="match status" value="1"/>
</dbReference>
<dbReference type="PANTHER" id="PTHR11545">
    <property type="entry name" value="RIBOSOMAL PROTEIN L13"/>
    <property type="match status" value="1"/>
</dbReference>
<dbReference type="Pfam" id="PF00572">
    <property type="entry name" value="Ribosomal_L13"/>
    <property type="match status" value="1"/>
</dbReference>
<dbReference type="SUPFAM" id="SSF52161">
    <property type="entry name" value="Ribosomal protein L13"/>
    <property type="match status" value="1"/>
</dbReference>
<dbReference type="PROSITE" id="PS00783">
    <property type="entry name" value="RIBOSOMAL_L13"/>
    <property type="match status" value="1"/>
</dbReference>
<sequence>MVSGSGICAKEVVVDARHHMLGRLASILAKELLHGQRVVVVRCEEICMSGGLVRQKMKYLRFLRKRMNTKPSHGPIHFRAPSRILWRTIRGMIPHKTKRGAAALATLRAFEGVPPPYDRKKRMVIPDALKVLRLQPGHKYCLLGRLSKEVGWHHFDTITELEEKRKAKAQVSYERRKQLAKLRSKAVELAEKQLAPEMELLASLKY</sequence>
<accession>O65055</accession>
<protein>
    <recommendedName>
        <fullName evidence="1">Large ribosomal subunit protein uL13</fullName>
    </recommendedName>
    <alternativeName>
        <fullName>60S ribosomal protein L13a</fullName>
    </alternativeName>
</protein>
<organism>
    <name type="scientific">Picea mariana</name>
    <name type="common">Black spruce</name>
    <name type="synonym">Abies mariana</name>
    <dbReference type="NCBI Taxonomy" id="3335"/>
    <lineage>
        <taxon>Eukaryota</taxon>
        <taxon>Viridiplantae</taxon>
        <taxon>Streptophyta</taxon>
        <taxon>Embryophyta</taxon>
        <taxon>Tracheophyta</taxon>
        <taxon>Spermatophyta</taxon>
        <taxon>Pinopsida</taxon>
        <taxon>Pinidae</taxon>
        <taxon>Conifers I</taxon>
        <taxon>Pinales</taxon>
        <taxon>Pinaceae</taxon>
        <taxon>Picea</taxon>
    </lineage>
</organism>
<comment type="similarity">
    <text evidence="1">Belongs to the universal ribosomal protein uL13 family.</text>
</comment>
<proteinExistence type="evidence at transcript level"/>
<feature type="chain" id="PRO_0000133785" description="Large ribosomal subunit protein uL13">
    <location>
        <begin position="1"/>
        <end position="206"/>
    </location>
</feature>